<gene>
    <name type="primary">Smr2</name>
    <name type="synonym">Msg2</name>
    <name type="synonym">Vcs2</name>
</gene>
<sequence length="143" mass="16158">MKALYMVFVLWVLIGCFLSSECQRGFRGQHDPTRPLSPSNPSSHFYPQPDPNRVQISQPDNIPIFMFEQPHSLNICVPPPPLYLGEEFEKLPPNTHIPYILIRPDIEPPSKYIQPVPRKKSNATPAANNFITTATAPNSTDSF</sequence>
<name>SMR2C_MOUSE</name>
<reference key="1">
    <citation type="journal article" date="1997" name="Gene">
        <title>The mouse Vcs2 gene is a composite structure which evolved by gene fusion and encodes five distinct salivary mRNA species.</title>
        <authorList>
            <person name="Senorale-Pose M."/>
            <person name="Rougeon F."/>
        </authorList>
    </citation>
    <scope>NUCLEOTIDE SEQUENCE [GENOMIC DNA / MRNA] (ISOFORMS ALPHA; BETA; GAMMA; DELTA AND EPSILON)</scope>
    <source>
        <strain>BALB/cJ</strain>
        <tissue>Submandibular gland</tissue>
    </source>
</reference>
<comment type="function">
    <text>May play a role in protection or detoxification.</text>
</comment>
<comment type="subcellular location">
    <subcellularLocation>
        <location>Secreted</location>
    </subcellularLocation>
</comment>
<comment type="alternative products">
    <event type="alternative splicing"/>
    <isoform>
        <id>O35985-1</id>
        <name>Gamma</name>
        <sequence type="displayed"/>
    </isoform>
    <isoform>
        <id>O09133-1</id>
        <name>Alpha</name>
        <sequence type="external"/>
    </isoform>
    <isoform>
        <id>O35982-1</id>
        <name>Beta</name>
        <sequence type="external"/>
    </isoform>
    <isoform>
        <id>O35979-1</id>
        <name>Delta</name>
        <sequence type="external"/>
    </isoform>
    <isoform>
        <id>O35961-1</id>
        <name>Epsilon</name>
        <sequence type="external"/>
    </isoform>
</comment>
<accession>O35985</accession>
<evidence type="ECO:0000255" key="1"/>
<evidence type="ECO:0000256" key="2">
    <source>
        <dbReference type="SAM" id="MobiDB-lite"/>
    </source>
</evidence>
<organism>
    <name type="scientific">Mus musculus</name>
    <name type="common">Mouse</name>
    <dbReference type="NCBI Taxonomy" id="10090"/>
    <lineage>
        <taxon>Eukaryota</taxon>
        <taxon>Metazoa</taxon>
        <taxon>Chordata</taxon>
        <taxon>Craniata</taxon>
        <taxon>Vertebrata</taxon>
        <taxon>Euteleostomi</taxon>
        <taxon>Mammalia</taxon>
        <taxon>Eutheria</taxon>
        <taxon>Euarchontoglires</taxon>
        <taxon>Glires</taxon>
        <taxon>Rodentia</taxon>
        <taxon>Myomorpha</taxon>
        <taxon>Muroidea</taxon>
        <taxon>Muridae</taxon>
        <taxon>Murinae</taxon>
        <taxon>Mus</taxon>
        <taxon>Mus</taxon>
    </lineage>
</organism>
<feature type="signal peptide" evidence="1">
    <location>
        <begin position="1"/>
        <end position="22"/>
    </location>
</feature>
<feature type="chain" id="PRO_0000022376" description="Submaxillary gland androgen-regulated protein 2, isoform gamma">
    <location>
        <begin position="23"/>
        <end position="143"/>
    </location>
</feature>
<feature type="region of interest" description="Disordered" evidence="2">
    <location>
        <begin position="28"/>
        <end position="50"/>
    </location>
</feature>
<feature type="compositionally biased region" description="Polar residues" evidence="2">
    <location>
        <begin position="36"/>
        <end position="45"/>
    </location>
</feature>
<keyword id="KW-0025">Alternative splicing</keyword>
<keyword id="KW-0216">Detoxification</keyword>
<keyword id="KW-1185">Reference proteome</keyword>
<keyword id="KW-0964">Secreted</keyword>
<keyword id="KW-0732">Signal</keyword>
<proteinExistence type="evidence at transcript level"/>
<dbReference type="EMBL" id="U82377">
    <property type="protein sequence ID" value="AAB93515.1"/>
    <property type="molecule type" value="mRNA"/>
</dbReference>
<dbReference type="EMBL" id="U82375">
    <property type="protein sequence ID" value="AAB93512.1"/>
    <property type="molecule type" value="Genomic_DNA"/>
</dbReference>
<dbReference type="CCDS" id="CCDS39137.1">
    <molecule id="O35985-1"/>
</dbReference>
<dbReference type="RefSeq" id="NP_067264.2">
    <molecule id="O35985-1"/>
    <property type="nucleotide sequence ID" value="NM_021289.2"/>
</dbReference>
<dbReference type="PaxDb" id="10090-ENSMUSP00000084271"/>
<dbReference type="DNASU" id="20600"/>
<dbReference type="Ensembl" id="ENSMUST00000087043.8">
    <molecule id="O35985-1"/>
    <property type="protein sequence ID" value="ENSMUSP00000084271.4"/>
    <property type="gene ID" value="ENSMUSG00000029281.14"/>
</dbReference>
<dbReference type="GeneID" id="20600"/>
<dbReference type="UCSC" id="uc008xzl.1">
    <molecule id="O35985-1"/>
    <property type="organism name" value="mouse"/>
</dbReference>
<dbReference type="AGR" id="MGI:102762"/>
<dbReference type="CTD" id="20600"/>
<dbReference type="MGI" id="MGI:102762">
    <property type="gene designation" value="Smr2"/>
</dbReference>
<dbReference type="VEuPathDB" id="HostDB:ENSMUSG00000029281"/>
<dbReference type="GeneTree" id="ENSGT00940000164646"/>
<dbReference type="OrthoDB" id="9635060at2759"/>
<dbReference type="BioGRID-ORCS" id="20600">
    <property type="hits" value="0 hits in 76 CRISPR screens"/>
</dbReference>
<dbReference type="ChiTaRS" id="Smr2">
    <property type="organism name" value="mouse"/>
</dbReference>
<dbReference type="Proteomes" id="UP000000589">
    <property type="component" value="Chromosome 5"/>
</dbReference>
<dbReference type="Bgee" id="ENSMUSG00000029281">
    <property type="expression patterns" value="Expressed in triceps brachii and 131 other cell types or tissues"/>
</dbReference>
<dbReference type="ExpressionAtlas" id="O35985">
    <property type="expression patterns" value="differential"/>
</dbReference>
<dbReference type="GO" id="GO:0005576">
    <property type="term" value="C:extracellular region"/>
    <property type="evidence" value="ECO:0007669"/>
    <property type="project" value="UniProtKB-SubCell"/>
</dbReference>
<dbReference type="GO" id="GO:0009636">
    <property type="term" value="P:response to toxic substance"/>
    <property type="evidence" value="ECO:0007669"/>
    <property type="project" value="UniProtKB-KW"/>
</dbReference>
<dbReference type="InterPro" id="IPR026288">
    <property type="entry name" value="SMR-like"/>
</dbReference>
<dbReference type="PANTHER" id="PTHR14179">
    <property type="entry name" value="SMR1-RELATED"/>
    <property type="match status" value="1"/>
</dbReference>
<dbReference type="PANTHER" id="PTHR14179:SF14">
    <property type="entry name" value="SUBMAXILLARY GLAND ANDROGEN REGULATED PROTEIN 2 LIKE-RELATED"/>
    <property type="match status" value="1"/>
</dbReference>
<dbReference type="Pfam" id="PF15621">
    <property type="entry name" value="PROL5-SMR"/>
    <property type="match status" value="1"/>
</dbReference>
<protein>
    <recommendedName>
        <fullName>Submaxillary gland androgen-regulated protein 2, isoform gamma</fullName>
    </recommendedName>
    <alternativeName>
        <fullName>Salivary protein MSG2, isoform gamma</fullName>
    </alternativeName>
</protein>